<evidence type="ECO:0000255" key="1">
    <source>
        <dbReference type="HAMAP-Rule" id="MF_01309"/>
    </source>
</evidence>
<evidence type="ECO:0000256" key="2">
    <source>
        <dbReference type="SAM" id="MobiDB-lite"/>
    </source>
</evidence>
<evidence type="ECO:0000305" key="3"/>
<organism>
    <name type="scientific">Paracoccus denitrificans (strain Pd 1222)</name>
    <dbReference type="NCBI Taxonomy" id="318586"/>
    <lineage>
        <taxon>Bacteria</taxon>
        <taxon>Pseudomonadati</taxon>
        <taxon>Pseudomonadota</taxon>
        <taxon>Alphaproteobacteria</taxon>
        <taxon>Rhodobacterales</taxon>
        <taxon>Paracoccaceae</taxon>
        <taxon>Paracoccus</taxon>
    </lineage>
</organism>
<reference key="1">
    <citation type="submission" date="2006-12" db="EMBL/GenBank/DDBJ databases">
        <title>Complete sequence of chromosome 1 of Paracoccus denitrificans PD1222.</title>
        <authorList>
            <person name="Copeland A."/>
            <person name="Lucas S."/>
            <person name="Lapidus A."/>
            <person name="Barry K."/>
            <person name="Detter J.C."/>
            <person name="Glavina del Rio T."/>
            <person name="Hammon N."/>
            <person name="Israni S."/>
            <person name="Dalin E."/>
            <person name="Tice H."/>
            <person name="Pitluck S."/>
            <person name="Munk A.C."/>
            <person name="Brettin T."/>
            <person name="Bruce D."/>
            <person name="Han C."/>
            <person name="Tapia R."/>
            <person name="Gilna P."/>
            <person name="Schmutz J."/>
            <person name="Larimer F."/>
            <person name="Land M."/>
            <person name="Hauser L."/>
            <person name="Kyrpides N."/>
            <person name="Lykidis A."/>
            <person name="Spiro S."/>
            <person name="Richardson D.J."/>
            <person name="Moir J.W.B."/>
            <person name="Ferguson S.J."/>
            <person name="van Spanning R.J.M."/>
            <person name="Richardson P."/>
        </authorList>
    </citation>
    <scope>NUCLEOTIDE SEQUENCE [LARGE SCALE GENOMIC DNA]</scope>
    <source>
        <strain>Pd 1222</strain>
    </source>
</reference>
<proteinExistence type="inferred from homology"/>
<keyword id="KW-1185">Reference proteome</keyword>
<keyword id="KW-0687">Ribonucleoprotein</keyword>
<keyword id="KW-0689">Ribosomal protein</keyword>
<keyword id="KW-0694">RNA-binding</keyword>
<keyword id="KW-0699">rRNA-binding</keyword>
<name>RS3_PARDP</name>
<protein>
    <recommendedName>
        <fullName evidence="1">Small ribosomal subunit protein uS3</fullName>
    </recommendedName>
    <alternativeName>
        <fullName evidence="3">30S ribosomal protein S3</fullName>
    </alternativeName>
</protein>
<accession>A1B033</accession>
<feature type="chain" id="PRO_0000293845" description="Small ribosomal subunit protein uS3">
    <location>
        <begin position="1"/>
        <end position="240"/>
    </location>
</feature>
<feature type="domain" description="KH type-2" evidence="1">
    <location>
        <begin position="39"/>
        <end position="107"/>
    </location>
</feature>
<feature type="region of interest" description="Disordered" evidence="2">
    <location>
        <begin position="212"/>
        <end position="240"/>
    </location>
</feature>
<feature type="compositionally biased region" description="Basic and acidic residues" evidence="2">
    <location>
        <begin position="212"/>
        <end position="221"/>
    </location>
</feature>
<feature type="compositionally biased region" description="Basic and acidic residues" evidence="2">
    <location>
        <begin position="231"/>
        <end position="240"/>
    </location>
</feature>
<sequence>MGQKVNPIGMRLQVNRTWDSRWYADDKDYGNLLLEDLKIRDFIKKEAKQAGVSRVVIERPHKKCRVTIYAARPGVIIGKKGADIETLRKKLANFTGSELHLNIVEVRKPELDAQLVAESIAQQLERRVSFRRAMKRAVQNAMRMGALGIRVNVSGRLGGAEIARTEWYREGRVPLHTLRADIDYALSEASTPYGIIGVKVWIFKGEIMEHDPQARDRRATEAQDGPSPRGPRRDRDRDAR</sequence>
<dbReference type="EMBL" id="CP000489">
    <property type="protein sequence ID" value="ABL68877.1"/>
    <property type="molecule type" value="Genomic_DNA"/>
</dbReference>
<dbReference type="RefSeq" id="WP_011747106.1">
    <property type="nucleotide sequence ID" value="NC_008686.1"/>
</dbReference>
<dbReference type="SMR" id="A1B033"/>
<dbReference type="STRING" id="318586.Pden_0765"/>
<dbReference type="EnsemblBacteria" id="ABL68877">
    <property type="protein sequence ID" value="ABL68877"/>
    <property type="gene ID" value="Pden_0765"/>
</dbReference>
<dbReference type="GeneID" id="93451989"/>
<dbReference type="KEGG" id="pde:Pden_0765"/>
<dbReference type="eggNOG" id="COG0092">
    <property type="taxonomic scope" value="Bacteria"/>
</dbReference>
<dbReference type="HOGENOM" id="CLU_058591_0_2_5"/>
<dbReference type="OrthoDB" id="9806396at2"/>
<dbReference type="Proteomes" id="UP000000361">
    <property type="component" value="Chromosome 1"/>
</dbReference>
<dbReference type="GO" id="GO:0022627">
    <property type="term" value="C:cytosolic small ribosomal subunit"/>
    <property type="evidence" value="ECO:0007669"/>
    <property type="project" value="TreeGrafter"/>
</dbReference>
<dbReference type="GO" id="GO:0003729">
    <property type="term" value="F:mRNA binding"/>
    <property type="evidence" value="ECO:0007669"/>
    <property type="project" value="UniProtKB-UniRule"/>
</dbReference>
<dbReference type="GO" id="GO:0019843">
    <property type="term" value="F:rRNA binding"/>
    <property type="evidence" value="ECO:0007669"/>
    <property type="project" value="UniProtKB-UniRule"/>
</dbReference>
<dbReference type="GO" id="GO:0003735">
    <property type="term" value="F:structural constituent of ribosome"/>
    <property type="evidence" value="ECO:0007669"/>
    <property type="project" value="InterPro"/>
</dbReference>
<dbReference type="GO" id="GO:0006412">
    <property type="term" value="P:translation"/>
    <property type="evidence" value="ECO:0007669"/>
    <property type="project" value="UniProtKB-UniRule"/>
</dbReference>
<dbReference type="CDD" id="cd02412">
    <property type="entry name" value="KH-II_30S_S3"/>
    <property type="match status" value="1"/>
</dbReference>
<dbReference type="FunFam" id="3.30.1140.32:FF:000001">
    <property type="entry name" value="30S ribosomal protein S3"/>
    <property type="match status" value="1"/>
</dbReference>
<dbReference type="FunFam" id="3.30.300.20:FF:000001">
    <property type="entry name" value="30S ribosomal protein S3"/>
    <property type="match status" value="1"/>
</dbReference>
<dbReference type="Gene3D" id="3.30.300.20">
    <property type="match status" value="1"/>
</dbReference>
<dbReference type="Gene3D" id="3.30.1140.32">
    <property type="entry name" value="Ribosomal protein S3, C-terminal domain"/>
    <property type="match status" value="1"/>
</dbReference>
<dbReference type="HAMAP" id="MF_01309_B">
    <property type="entry name" value="Ribosomal_uS3_B"/>
    <property type="match status" value="1"/>
</dbReference>
<dbReference type="InterPro" id="IPR004087">
    <property type="entry name" value="KH_dom"/>
</dbReference>
<dbReference type="InterPro" id="IPR015946">
    <property type="entry name" value="KH_dom-like_a/b"/>
</dbReference>
<dbReference type="InterPro" id="IPR004044">
    <property type="entry name" value="KH_dom_type_2"/>
</dbReference>
<dbReference type="InterPro" id="IPR009019">
    <property type="entry name" value="KH_sf_prok-type"/>
</dbReference>
<dbReference type="InterPro" id="IPR036419">
    <property type="entry name" value="Ribosomal_S3_C_sf"/>
</dbReference>
<dbReference type="InterPro" id="IPR005704">
    <property type="entry name" value="Ribosomal_uS3_bac-typ"/>
</dbReference>
<dbReference type="InterPro" id="IPR001351">
    <property type="entry name" value="Ribosomal_uS3_C"/>
</dbReference>
<dbReference type="InterPro" id="IPR018280">
    <property type="entry name" value="Ribosomal_uS3_CS"/>
</dbReference>
<dbReference type="NCBIfam" id="TIGR01009">
    <property type="entry name" value="rpsC_bact"/>
    <property type="match status" value="1"/>
</dbReference>
<dbReference type="PANTHER" id="PTHR11760">
    <property type="entry name" value="30S/40S RIBOSOMAL PROTEIN S3"/>
    <property type="match status" value="1"/>
</dbReference>
<dbReference type="PANTHER" id="PTHR11760:SF19">
    <property type="entry name" value="SMALL RIBOSOMAL SUBUNIT PROTEIN US3C"/>
    <property type="match status" value="1"/>
</dbReference>
<dbReference type="Pfam" id="PF07650">
    <property type="entry name" value="KH_2"/>
    <property type="match status" value="1"/>
</dbReference>
<dbReference type="Pfam" id="PF00189">
    <property type="entry name" value="Ribosomal_S3_C"/>
    <property type="match status" value="1"/>
</dbReference>
<dbReference type="SMART" id="SM00322">
    <property type="entry name" value="KH"/>
    <property type="match status" value="1"/>
</dbReference>
<dbReference type="SUPFAM" id="SSF54814">
    <property type="entry name" value="Prokaryotic type KH domain (KH-domain type II)"/>
    <property type="match status" value="1"/>
</dbReference>
<dbReference type="SUPFAM" id="SSF54821">
    <property type="entry name" value="Ribosomal protein S3 C-terminal domain"/>
    <property type="match status" value="1"/>
</dbReference>
<dbReference type="PROSITE" id="PS50823">
    <property type="entry name" value="KH_TYPE_2"/>
    <property type="match status" value="1"/>
</dbReference>
<dbReference type="PROSITE" id="PS00548">
    <property type="entry name" value="RIBOSOMAL_S3"/>
    <property type="match status" value="1"/>
</dbReference>
<comment type="function">
    <text evidence="1">Binds the lower part of the 30S subunit head. Binds mRNA in the 70S ribosome, positioning it for translation.</text>
</comment>
<comment type="subunit">
    <text evidence="1">Part of the 30S ribosomal subunit. Forms a tight complex with proteins S10 and S14.</text>
</comment>
<comment type="similarity">
    <text evidence="1">Belongs to the universal ribosomal protein uS3 family.</text>
</comment>
<gene>
    <name evidence="1" type="primary">rpsC</name>
    <name type="ordered locus">Pden_0765</name>
</gene>